<evidence type="ECO:0000250" key="1">
    <source>
        <dbReference type="UniProtKB" id="P00426"/>
    </source>
</evidence>
<evidence type="ECO:0000250" key="2">
    <source>
        <dbReference type="UniProtKB" id="P00427"/>
    </source>
</evidence>
<evidence type="ECO:0000250" key="3">
    <source>
        <dbReference type="UniProtKB" id="P20674"/>
    </source>
</evidence>
<evidence type="ECO:0000269" key="4">
    <source>
    </source>
</evidence>
<evidence type="ECO:0000303" key="5">
    <source>
    </source>
</evidence>
<evidence type="ECO:0000305" key="6"/>
<protein>
    <recommendedName>
        <fullName>Cytochrome c oxidase subunit 5A, mitochondrial</fullName>
    </recommendedName>
    <alternativeName>
        <fullName>Cytochrome c oxidase polypeptide Va</fullName>
    </alternativeName>
</protein>
<organism>
    <name type="scientific">Scyliorhinus canicula</name>
    <name type="common">Small-spotted catshark</name>
    <name type="synonym">Squalus canicula</name>
    <dbReference type="NCBI Taxonomy" id="7830"/>
    <lineage>
        <taxon>Eukaryota</taxon>
        <taxon>Metazoa</taxon>
        <taxon>Chordata</taxon>
        <taxon>Craniata</taxon>
        <taxon>Vertebrata</taxon>
        <taxon>Chondrichthyes</taxon>
        <taxon>Elasmobranchii</taxon>
        <taxon>Galeomorphii</taxon>
        <taxon>Galeoidea</taxon>
        <taxon>Carcharhiniformes</taxon>
        <taxon>Scyliorhinidae</taxon>
        <taxon>Scyliorhinus</taxon>
    </lineage>
</organism>
<feature type="chain" id="PRO_0000195215" description="Cytochrome c oxidase subunit 5A, mitochondrial">
    <location>
        <begin position="1"/>
        <end position="15" status="greater than"/>
    </location>
</feature>
<feature type="non-terminal residue" evidence="5">
    <location>
        <position position="15"/>
    </location>
</feature>
<gene>
    <name type="primary">COX5A</name>
</gene>
<accession>P83012</accession>
<dbReference type="UniPathway" id="UPA00705"/>
<dbReference type="GO" id="GO:0005743">
    <property type="term" value="C:mitochondrial inner membrane"/>
    <property type="evidence" value="ECO:0007669"/>
    <property type="project" value="UniProtKB-SubCell"/>
</dbReference>
<dbReference type="GO" id="GO:0005739">
    <property type="term" value="C:mitochondrion"/>
    <property type="evidence" value="ECO:0000314"/>
    <property type="project" value="UniProtKB"/>
</dbReference>
<dbReference type="GO" id="GO:0046872">
    <property type="term" value="F:metal ion binding"/>
    <property type="evidence" value="ECO:0007669"/>
    <property type="project" value="UniProtKB-KW"/>
</dbReference>
<dbReference type="GO" id="GO:0006119">
    <property type="term" value="P:oxidative phosphorylation"/>
    <property type="evidence" value="ECO:0007669"/>
    <property type="project" value="UniProtKB-UniPathway"/>
</dbReference>
<reference evidence="6" key="1">
    <citation type="journal article" date="2001" name="Biochem. Biophys. Res. Commun.">
        <title>N-terminal sequences of small ion channels in rectal glands of sharks: a biochemical hallmark for classification and phylogeny?</title>
        <authorList>
            <person name="Schuurmans Stekhoven F.M.A.H."/>
            <person name="Flik G."/>
            <person name="Wendelaar Bonga S.E."/>
        </authorList>
    </citation>
    <scope>PROTEIN SEQUENCE</scope>
    <source>
        <tissue evidence="4">Rectal gland</tissue>
    </source>
</reference>
<keyword id="KW-0903">Direct protein sequencing</keyword>
<keyword id="KW-0349">Heme</keyword>
<keyword id="KW-0408">Iron</keyword>
<keyword id="KW-0472">Membrane</keyword>
<keyword id="KW-0479">Metal-binding</keyword>
<keyword id="KW-0496">Mitochondrion</keyword>
<keyword id="KW-0999">Mitochondrion inner membrane</keyword>
<sequence length="15" mass="1720">SHGKQETDEEFDANL</sequence>
<comment type="function">
    <text evidence="2">Component of the cytochrome c oxidase, the last enzyme in the mitochondrial electron transport chain which drives oxidative phosphorylation. The respiratory chain contains 3 multisubunit complexes succinate dehydrogenase (complex II, CII), ubiquinol-cytochrome c oxidoreductase (cytochrome b-c1 complex, complex III, CIII) and cytochrome c oxidase (complex IV, CIV), that cooperate to transfer electrons derived from NADH and succinate to molecular oxygen, creating an electrochemical gradient over the inner membrane that drives transmembrane transport and the ATP synthase. Cytochrome c oxidase is the component of the respiratory chain that catalyzes the reduction of oxygen to water. Electrons originating from reduced cytochrome c in the intermembrane space (IMS) are transferred via the dinuclear copper A center (CU(A)) of subunit 2 and heme A of subunit 1 to the active site in subunit 1, a binuclear center (BNC) formed by heme A3 and copper B (CU(B)). The BNC reduces molecular oxygen to 2 water molecules using 4 electrons from cytochrome c in the IMS and 4 protons from the mitochondrial matrix.</text>
</comment>
<comment type="pathway">
    <text evidence="2">Energy metabolism; oxidative phosphorylation.</text>
</comment>
<comment type="subunit">
    <text evidence="1 3">Component of the cytochrome c oxidase (complex IV, CIV), a multisubunit enzyme composed of 14 subunits. The complex is composed of a catalytic core of 3 subunits MT-CO1, MT-CO2 and MT-CO3, encoded in the mitochondrial DNA, and 11 supernumerary subunits COX4I, COX5A, COX5B, COX6A, COX6B, COX6C, COX7A, COX7B, COX7C, COX8 and NDUFA4, which are encoded in the nuclear genome. The complex exists as a monomer or a dimer and forms supercomplexes (SCs) in the inner mitochondrial membrane with NADH-ubiquinone oxidoreductase (complex I, CI) and ubiquinol-cytochrome c oxidoreductase (cytochrome b-c1 complex, complex III, CIII), resulting in different assemblies (supercomplex SCI(1)III(2)IV(1) and megacomplex MCI(2)III(2)IV(2)) (By similarity). Interacts with AFG1L (By similarity). Interacts with RAB5IF (By similarity).</text>
</comment>
<comment type="subcellular location">
    <subcellularLocation>
        <location evidence="1">Mitochondrion inner membrane</location>
        <topology evidence="1">Peripheral membrane protein</topology>
        <orientation evidence="1">Matrix side</orientation>
    </subcellularLocation>
</comment>
<comment type="similarity">
    <text evidence="6">Belongs to the cytochrome c oxidase subunit 5A family.</text>
</comment>
<proteinExistence type="evidence at protein level"/>
<name>COX5A_SCYCA</name>